<proteinExistence type="inferred from homology"/>
<accession>Q8FJF0</accession>
<evidence type="ECO:0000255" key="1">
    <source>
        <dbReference type="HAMAP-Rule" id="MF_01552"/>
    </source>
</evidence>
<keyword id="KW-0067">ATP-binding</keyword>
<keyword id="KW-0436">Ligase</keyword>
<keyword id="KW-0460">Magnesium</keyword>
<keyword id="KW-0464">Manganese</keyword>
<keyword id="KW-0479">Metal-binding</keyword>
<keyword id="KW-0547">Nucleotide-binding</keyword>
<keyword id="KW-0648">Protein biosynthesis</keyword>
<keyword id="KW-1185">Reference proteome</keyword>
<sequence length="300" mass="32467">MKIAILSRDGTLYSCKRLREAAIQRGHLVEILDPLSCYMNINPAASSIHYKGRKLPHFDAVIPRIGTAITFYGTAALRQFEMLGSYPLNESVAIARARDKLRSMQLLARQGIDLPVTGIAHSPDDTSDLIDMVGGAPLVVKLVEGTQGIGVVLAETRQAAESVIDAFRGLNAHILVQEYIKEAQGCDIRCLVVGDEVVAAIERRAKEGDFRSNLHRGGAASVASITPQEREIAIKAARTMALDVAGVDILRANRGPLVMEVNASPGLEGIEKTTGIDIASKMIRWIERHATTEYCLKTGG</sequence>
<feature type="chain" id="PRO_0000205457" description="Ribosomal protein bS6--L-glutamate ligase">
    <location>
        <begin position="1"/>
        <end position="300"/>
    </location>
</feature>
<feature type="domain" description="ATP-grasp" evidence="1">
    <location>
        <begin position="104"/>
        <end position="287"/>
    </location>
</feature>
<feature type="binding site" evidence="1">
    <location>
        <position position="141"/>
    </location>
    <ligand>
        <name>ATP</name>
        <dbReference type="ChEBI" id="CHEBI:30616"/>
    </ligand>
</feature>
<feature type="binding site" evidence="1">
    <location>
        <begin position="178"/>
        <end position="179"/>
    </location>
    <ligand>
        <name>ATP</name>
        <dbReference type="ChEBI" id="CHEBI:30616"/>
    </ligand>
</feature>
<feature type="binding site" evidence="1">
    <location>
        <position position="187"/>
    </location>
    <ligand>
        <name>ATP</name>
        <dbReference type="ChEBI" id="CHEBI:30616"/>
    </ligand>
</feature>
<feature type="binding site" evidence="1">
    <location>
        <begin position="211"/>
        <end position="213"/>
    </location>
    <ligand>
        <name>ATP</name>
        <dbReference type="ChEBI" id="CHEBI:30616"/>
    </ligand>
</feature>
<feature type="binding site" evidence="1">
    <location>
        <position position="248"/>
    </location>
    <ligand>
        <name>Mg(2+)</name>
        <dbReference type="ChEBI" id="CHEBI:18420"/>
        <label>1</label>
    </ligand>
</feature>
<feature type="binding site" evidence="1">
    <location>
        <position position="248"/>
    </location>
    <ligand>
        <name>Mn(2+)</name>
        <dbReference type="ChEBI" id="CHEBI:29035"/>
        <label>1</label>
    </ligand>
</feature>
<feature type="binding site" evidence="1">
    <location>
        <position position="260"/>
    </location>
    <ligand>
        <name>Mg(2+)</name>
        <dbReference type="ChEBI" id="CHEBI:18420"/>
        <label>1</label>
    </ligand>
</feature>
<feature type="binding site" evidence="1">
    <location>
        <position position="260"/>
    </location>
    <ligand>
        <name>Mg(2+)</name>
        <dbReference type="ChEBI" id="CHEBI:18420"/>
        <label>2</label>
    </ligand>
</feature>
<feature type="binding site" evidence="1">
    <location>
        <position position="260"/>
    </location>
    <ligand>
        <name>Mn(2+)</name>
        <dbReference type="ChEBI" id="CHEBI:29035"/>
        <label>1</label>
    </ligand>
</feature>
<feature type="binding site" evidence="1">
    <location>
        <position position="260"/>
    </location>
    <ligand>
        <name>Mn(2+)</name>
        <dbReference type="ChEBI" id="CHEBI:29035"/>
        <label>2</label>
    </ligand>
</feature>
<feature type="binding site" evidence="1">
    <location>
        <position position="262"/>
    </location>
    <ligand>
        <name>Mg(2+)</name>
        <dbReference type="ChEBI" id="CHEBI:18420"/>
        <label>2</label>
    </ligand>
</feature>
<feature type="binding site" evidence="1">
    <location>
        <position position="262"/>
    </location>
    <ligand>
        <name>Mn(2+)</name>
        <dbReference type="ChEBI" id="CHEBI:29035"/>
        <label>2</label>
    </ligand>
</feature>
<reference key="1">
    <citation type="journal article" date="2002" name="Proc. Natl. Acad. Sci. U.S.A.">
        <title>Extensive mosaic structure revealed by the complete genome sequence of uropathogenic Escherichia coli.</title>
        <authorList>
            <person name="Welch R.A."/>
            <person name="Burland V."/>
            <person name="Plunkett G. III"/>
            <person name="Redford P."/>
            <person name="Roesch P."/>
            <person name="Rasko D."/>
            <person name="Buckles E.L."/>
            <person name="Liou S.-R."/>
            <person name="Boutin A."/>
            <person name="Hackett J."/>
            <person name="Stroud D."/>
            <person name="Mayhew G.F."/>
            <person name="Rose D.J."/>
            <person name="Zhou S."/>
            <person name="Schwartz D.C."/>
            <person name="Perna N.T."/>
            <person name="Mobley H.L.T."/>
            <person name="Donnenberg M.S."/>
            <person name="Blattner F.R."/>
        </authorList>
    </citation>
    <scope>NUCLEOTIDE SEQUENCE [LARGE SCALE GENOMIC DNA]</scope>
    <source>
        <strain>CFT073 / ATCC 700928 / UPEC</strain>
    </source>
</reference>
<organism>
    <name type="scientific">Escherichia coli O6:H1 (strain CFT073 / ATCC 700928 / UPEC)</name>
    <dbReference type="NCBI Taxonomy" id="199310"/>
    <lineage>
        <taxon>Bacteria</taxon>
        <taxon>Pseudomonadati</taxon>
        <taxon>Pseudomonadota</taxon>
        <taxon>Gammaproteobacteria</taxon>
        <taxon>Enterobacterales</taxon>
        <taxon>Enterobacteriaceae</taxon>
        <taxon>Escherichia</taxon>
    </lineage>
</organism>
<comment type="function">
    <text evidence="1">An L-glutamate ligase that catalyzes the ATP-dependent post-translational addition of glutamate residues to the C-terminus of ribosomal protein bS6 (RpsF). Is also able to catalyze the synthesis of poly-alpha-glutamate in vitro, via ATP hydrolysis from unprotected glutamate as substrate. The number of glutamate residues added to either RpsF or to poly-alpha-glutamate changes with pH.</text>
</comment>
<comment type="cofactor">
    <cofactor evidence="1">
        <name>Mg(2+)</name>
        <dbReference type="ChEBI" id="CHEBI:18420"/>
    </cofactor>
    <cofactor evidence="1">
        <name>Mn(2+)</name>
        <dbReference type="ChEBI" id="CHEBI:29035"/>
    </cofactor>
    <text evidence="1">Binds 2 magnesium or manganese ions per subunit.</text>
</comment>
<comment type="similarity">
    <text evidence="1">Belongs to the RimK family.</text>
</comment>
<protein>
    <recommendedName>
        <fullName evidence="1">Ribosomal protein bS6--L-glutamate ligase</fullName>
        <ecNumber evidence="1">6.3.2.-</ecNumber>
    </recommendedName>
    <alternativeName>
        <fullName evidence="1">Poly-alpha-glutamate synthase</fullName>
    </alternativeName>
    <alternativeName>
        <fullName evidence="1">Ribosomal protein bS6 modification protein</fullName>
    </alternativeName>
</protein>
<gene>
    <name evidence="1" type="primary">rimK</name>
    <name type="ordered locus">c0985</name>
</gene>
<dbReference type="EC" id="6.3.2.-" evidence="1"/>
<dbReference type="EMBL" id="AE014075">
    <property type="protein sequence ID" value="AAN79458.1"/>
    <property type="molecule type" value="Genomic_DNA"/>
</dbReference>
<dbReference type="RefSeq" id="WP_000684325.1">
    <property type="nucleotide sequence ID" value="NZ_CP051263.1"/>
</dbReference>
<dbReference type="SMR" id="Q8FJF0"/>
<dbReference type="STRING" id="199310.c0985"/>
<dbReference type="KEGG" id="ecc:c0985"/>
<dbReference type="eggNOG" id="COG0189">
    <property type="taxonomic scope" value="Bacteria"/>
</dbReference>
<dbReference type="HOGENOM" id="CLU_054353_0_1_6"/>
<dbReference type="BioCyc" id="ECOL199310:C0985-MONOMER"/>
<dbReference type="Proteomes" id="UP000001410">
    <property type="component" value="Chromosome"/>
</dbReference>
<dbReference type="GO" id="GO:0005737">
    <property type="term" value="C:cytoplasm"/>
    <property type="evidence" value="ECO:0007669"/>
    <property type="project" value="TreeGrafter"/>
</dbReference>
<dbReference type="GO" id="GO:0005524">
    <property type="term" value="F:ATP binding"/>
    <property type="evidence" value="ECO:0007669"/>
    <property type="project" value="UniProtKB-UniRule"/>
</dbReference>
<dbReference type="GO" id="GO:0046872">
    <property type="term" value="F:metal ion binding"/>
    <property type="evidence" value="ECO:0007669"/>
    <property type="project" value="UniProtKB-KW"/>
</dbReference>
<dbReference type="GO" id="GO:0018169">
    <property type="term" value="F:ribosomal S6-glutamic acid ligase activity"/>
    <property type="evidence" value="ECO:0007669"/>
    <property type="project" value="UniProtKB-UniRule"/>
</dbReference>
<dbReference type="GO" id="GO:0036211">
    <property type="term" value="P:protein modification process"/>
    <property type="evidence" value="ECO:0007669"/>
    <property type="project" value="InterPro"/>
</dbReference>
<dbReference type="GO" id="GO:0009432">
    <property type="term" value="P:SOS response"/>
    <property type="evidence" value="ECO:0007669"/>
    <property type="project" value="TreeGrafter"/>
</dbReference>
<dbReference type="GO" id="GO:0006412">
    <property type="term" value="P:translation"/>
    <property type="evidence" value="ECO:0007669"/>
    <property type="project" value="UniProtKB-KW"/>
</dbReference>
<dbReference type="FunFam" id="3.40.50.20:FF:000004">
    <property type="entry name" value="Probable alpha-L-glutamate ligase"/>
    <property type="match status" value="1"/>
</dbReference>
<dbReference type="FunFam" id="3.30.1490.20:FF:000005">
    <property type="entry name" value="Probable alpha-L-glutamate ligase 1"/>
    <property type="match status" value="1"/>
</dbReference>
<dbReference type="FunFam" id="3.30.470.20:FF:000016">
    <property type="entry name" value="Ribosomal protein S6--L-glutamate ligase"/>
    <property type="match status" value="1"/>
</dbReference>
<dbReference type="Gene3D" id="3.40.50.20">
    <property type="match status" value="1"/>
</dbReference>
<dbReference type="Gene3D" id="3.30.1490.20">
    <property type="entry name" value="ATP-grasp fold, A domain"/>
    <property type="match status" value="1"/>
</dbReference>
<dbReference type="Gene3D" id="3.30.470.20">
    <property type="entry name" value="ATP-grasp fold, B domain"/>
    <property type="match status" value="1"/>
</dbReference>
<dbReference type="HAMAP" id="MF_01552">
    <property type="entry name" value="RimK"/>
    <property type="match status" value="1"/>
</dbReference>
<dbReference type="InterPro" id="IPR011761">
    <property type="entry name" value="ATP-grasp"/>
</dbReference>
<dbReference type="InterPro" id="IPR013651">
    <property type="entry name" value="ATP-grasp_RimK-type"/>
</dbReference>
<dbReference type="InterPro" id="IPR013815">
    <property type="entry name" value="ATP_grasp_subdomain_1"/>
</dbReference>
<dbReference type="InterPro" id="IPR023533">
    <property type="entry name" value="RimK"/>
</dbReference>
<dbReference type="InterPro" id="IPR041107">
    <property type="entry name" value="Rimk_N"/>
</dbReference>
<dbReference type="InterPro" id="IPR004666">
    <property type="entry name" value="Rp_bS6_RimK/Lys_biosynth_LsyX"/>
</dbReference>
<dbReference type="NCBIfam" id="NF007764">
    <property type="entry name" value="PRK10446.1"/>
    <property type="match status" value="1"/>
</dbReference>
<dbReference type="NCBIfam" id="TIGR00768">
    <property type="entry name" value="rimK_fam"/>
    <property type="match status" value="1"/>
</dbReference>
<dbReference type="PANTHER" id="PTHR21621:SF7">
    <property type="entry name" value="RIBOSOMAL PROTEIN BS6--L-GLUTAMATE LIGASE"/>
    <property type="match status" value="1"/>
</dbReference>
<dbReference type="PANTHER" id="PTHR21621">
    <property type="entry name" value="RIBOSOMAL PROTEIN S6 MODIFICATION PROTEIN"/>
    <property type="match status" value="1"/>
</dbReference>
<dbReference type="Pfam" id="PF08443">
    <property type="entry name" value="RimK"/>
    <property type="match status" value="1"/>
</dbReference>
<dbReference type="Pfam" id="PF18030">
    <property type="entry name" value="Rimk_N"/>
    <property type="match status" value="1"/>
</dbReference>
<dbReference type="SUPFAM" id="SSF56059">
    <property type="entry name" value="Glutathione synthetase ATP-binding domain-like"/>
    <property type="match status" value="1"/>
</dbReference>
<dbReference type="PROSITE" id="PS50975">
    <property type="entry name" value="ATP_GRASP"/>
    <property type="match status" value="1"/>
</dbReference>
<name>RIMK_ECOL6</name>